<proteinExistence type="inferred from homology"/>
<gene>
    <name type="ordered locus">Ctha_0558</name>
</gene>
<keyword id="KW-0547">Nucleotide-binding</keyword>
<keyword id="KW-1185">Reference proteome</keyword>
<dbReference type="EMBL" id="CP001100">
    <property type="protein sequence ID" value="ACF13029.1"/>
    <property type="molecule type" value="Genomic_DNA"/>
</dbReference>
<dbReference type="RefSeq" id="WP_012499113.1">
    <property type="nucleotide sequence ID" value="NC_011026.1"/>
</dbReference>
<dbReference type="SMR" id="B3QV75"/>
<dbReference type="STRING" id="517418.Ctha_0558"/>
<dbReference type="KEGG" id="cts:Ctha_0558"/>
<dbReference type="eggNOG" id="COG1666">
    <property type="taxonomic scope" value="Bacteria"/>
</dbReference>
<dbReference type="HOGENOM" id="CLU_099839_1_0_10"/>
<dbReference type="OrthoDB" id="9801447at2"/>
<dbReference type="Proteomes" id="UP000001208">
    <property type="component" value="Chromosome"/>
</dbReference>
<dbReference type="GO" id="GO:0005829">
    <property type="term" value="C:cytosol"/>
    <property type="evidence" value="ECO:0007669"/>
    <property type="project" value="TreeGrafter"/>
</dbReference>
<dbReference type="GO" id="GO:0000166">
    <property type="term" value="F:nucleotide binding"/>
    <property type="evidence" value="ECO:0007669"/>
    <property type="project" value="TreeGrafter"/>
</dbReference>
<dbReference type="CDD" id="cd11740">
    <property type="entry name" value="YajQ_like"/>
    <property type="match status" value="1"/>
</dbReference>
<dbReference type="Gene3D" id="3.30.70.860">
    <property type="match status" value="1"/>
</dbReference>
<dbReference type="Gene3D" id="3.30.70.990">
    <property type="entry name" value="YajQ-like, domain 2"/>
    <property type="match status" value="1"/>
</dbReference>
<dbReference type="HAMAP" id="MF_00632">
    <property type="entry name" value="YajQ"/>
    <property type="match status" value="1"/>
</dbReference>
<dbReference type="InterPro" id="IPR007551">
    <property type="entry name" value="DUF520"/>
</dbReference>
<dbReference type="InterPro" id="IPR035571">
    <property type="entry name" value="UPF0234-like_C"/>
</dbReference>
<dbReference type="InterPro" id="IPR035570">
    <property type="entry name" value="UPF0234_N"/>
</dbReference>
<dbReference type="InterPro" id="IPR036183">
    <property type="entry name" value="YajQ-like_sf"/>
</dbReference>
<dbReference type="NCBIfam" id="NF003819">
    <property type="entry name" value="PRK05412.1"/>
    <property type="match status" value="1"/>
</dbReference>
<dbReference type="PANTHER" id="PTHR30476">
    <property type="entry name" value="UPF0234 PROTEIN YAJQ"/>
    <property type="match status" value="1"/>
</dbReference>
<dbReference type="PANTHER" id="PTHR30476:SF0">
    <property type="entry name" value="UPF0234 PROTEIN YAJQ"/>
    <property type="match status" value="1"/>
</dbReference>
<dbReference type="Pfam" id="PF04461">
    <property type="entry name" value="DUF520"/>
    <property type="match status" value="1"/>
</dbReference>
<dbReference type="SUPFAM" id="SSF89963">
    <property type="entry name" value="YajQ-like"/>
    <property type="match status" value="2"/>
</dbReference>
<name>Y558_CHLT3</name>
<comment type="function">
    <text evidence="1">Nucleotide-binding protein.</text>
</comment>
<comment type="similarity">
    <text evidence="1">Belongs to the YajQ family.</text>
</comment>
<evidence type="ECO:0000255" key="1">
    <source>
        <dbReference type="HAMAP-Rule" id="MF_00632"/>
    </source>
</evidence>
<organism>
    <name type="scientific">Chloroherpeton thalassium (strain ATCC 35110 / GB-78)</name>
    <dbReference type="NCBI Taxonomy" id="517418"/>
    <lineage>
        <taxon>Bacteria</taxon>
        <taxon>Pseudomonadati</taxon>
        <taxon>Chlorobiota</taxon>
        <taxon>Chlorobiia</taxon>
        <taxon>Chlorobiales</taxon>
        <taxon>Chloroherpetonaceae</taxon>
        <taxon>Chloroherpeton</taxon>
    </lineage>
</organism>
<accession>B3QV75</accession>
<protein>
    <recommendedName>
        <fullName evidence="1">Nucleotide-binding protein Ctha_0558</fullName>
    </recommendedName>
</protein>
<reference key="1">
    <citation type="submission" date="2008-06" db="EMBL/GenBank/DDBJ databases">
        <title>Complete sequence of Chloroherpeton thalassium ATCC 35110.</title>
        <authorList>
            <consortium name="US DOE Joint Genome Institute"/>
            <person name="Lucas S."/>
            <person name="Copeland A."/>
            <person name="Lapidus A."/>
            <person name="Glavina del Rio T."/>
            <person name="Dalin E."/>
            <person name="Tice H."/>
            <person name="Bruce D."/>
            <person name="Goodwin L."/>
            <person name="Pitluck S."/>
            <person name="Schmutz J."/>
            <person name="Larimer F."/>
            <person name="Land M."/>
            <person name="Hauser L."/>
            <person name="Kyrpides N."/>
            <person name="Mikhailova N."/>
            <person name="Liu Z."/>
            <person name="Li T."/>
            <person name="Zhao F."/>
            <person name="Overmann J."/>
            <person name="Bryant D.A."/>
            <person name="Richardson P."/>
        </authorList>
    </citation>
    <scope>NUCLEOTIDE SEQUENCE [LARGE SCALE GENOMIC DNA]</scope>
    <source>
        <strain>ATCC 35110 / GB-78</strain>
    </source>
</reference>
<feature type="chain" id="PRO_1000130611" description="Nucleotide-binding protein Ctha_0558">
    <location>
        <begin position="1"/>
        <end position="165"/>
    </location>
</feature>
<sequence length="165" mass="18715">MSSTFSFDVVSKLDMQEFDNALNQAKKELQQRYDLKNTNSSIEFNQKDMQLTLESADEFSLKSVVDIIESKMIKRGISIKSLDFGKVEPASQKSVRQKISLKEGIDKENAKKITNAVKDMKLKVQASVQGEEVRISGKSKDELQTVMSALKEMDLPVPLQFTNYR</sequence>